<organism>
    <name type="scientific">Shewanella sp. (strain MR-4)</name>
    <dbReference type="NCBI Taxonomy" id="60480"/>
    <lineage>
        <taxon>Bacteria</taxon>
        <taxon>Pseudomonadati</taxon>
        <taxon>Pseudomonadota</taxon>
        <taxon>Gammaproteobacteria</taxon>
        <taxon>Alteromonadales</taxon>
        <taxon>Shewanellaceae</taxon>
        <taxon>Shewanella</taxon>
    </lineage>
</organism>
<evidence type="ECO:0000255" key="1">
    <source>
        <dbReference type="HAMAP-Rule" id="MF_01431"/>
    </source>
</evidence>
<comment type="function">
    <text evidence="1">Hydrolyzes cytidine or uridine to ribose and cytosine or uracil, respectively.</text>
</comment>
<comment type="similarity">
    <text evidence="1">Belongs to the IUNH family. RihA subfamily.</text>
</comment>
<gene>
    <name evidence="1" type="primary">rihA</name>
    <name type="ordered locus">Shewmr4_3306</name>
</gene>
<feature type="chain" id="PRO_1000024400" description="Pyrimidine-specific ribonucleoside hydrolase RihA">
    <location>
        <begin position="1"/>
        <end position="318"/>
    </location>
</feature>
<feature type="active site" evidence="1">
    <location>
        <position position="240"/>
    </location>
</feature>
<sequence>MSRPIILDCDPGHDDAIALILALAHPELNPLAVTTSAGNQTPDKTLNNALRILTLLNRSDIPVAGGAVKPLSRELMIADNVHGETGLDGPALPAPSFQPQAVNAVELMAEKIRQSDKPVTLVPTGPLTNIALLLASHGELHAKIERIVLMGGAAGVGNWTPAAEFNIFVDPEAADIVFKSGIPITMCGLDVTHQAQIMDEDIERIRAIPNPVAKCVAELLDFFMIYHRDPKWGFVGAPLHDPCTIAWLLNPALFDAQDCWVGIETQSELTLGMTVVDRYQLTGKPTNATVLFGIDRQGFVDLLVDSLAVYTPTYLNRR</sequence>
<accession>Q0HEZ4</accession>
<name>RIHA_SHESM</name>
<reference key="1">
    <citation type="submission" date="2006-08" db="EMBL/GenBank/DDBJ databases">
        <title>Complete sequence of Shewanella sp. MR-4.</title>
        <authorList>
            <consortium name="US DOE Joint Genome Institute"/>
            <person name="Copeland A."/>
            <person name="Lucas S."/>
            <person name="Lapidus A."/>
            <person name="Barry K."/>
            <person name="Detter J.C."/>
            <person name="Glavina del Rio T."/>
            <person name="Hammon N."/>
            <person name="Israni S."/>
            <person name="Dalin E."/>
            <person name="Tice H."/>
            <person name="Pitluck S."/>
            <person name="Kiss H."/>
            <person name="Brettin T."/>
            <person name="Bruce D."/>
            <person name="Han C."/>
            <person name="Tapia R."/>
            <person name="Gilna P."/>
            <person name="Schmutz J."/>
            <person name="Larimer F."/>
            <person name="Land M."/>
            <person name="Hauser L."/>
            <person name="Kyrpides N."/>
            <person name="Mikhailova N."/>
            <person name="Nealson K."/>
            <person name="Konstantinidis K."/>
            <person name="Klappenbach J."/>
            <person name="Tiedje J."/>
            <person name="Richardson P."/>
        </authorList>
    </citation>
    <scope>NUCLEOTIDE SEQUENCE [LARGE SCALE GENOMIC DNA]</scope>
    <source>
        <strain>MR-4</strain>
    </source>
</reference>
<proteinExistence type="inferred from homology"/>
<dbReference type="EC" id="3.2.-.-" evidence="1"/>
<dbReference type="EMBL" id="CP000446">
    <property type="protein sequence ID" value="ABI40373.1"/>
    <property type="molecule type" value="Genomic_DNA"/>
</dbReference>
<dbReference type="RefSeq" id="WP_011624041.1">
    <property type="nucleotide sequence ID" value="NC_008321.1"/>
</dbReference>
<dbReference type="SMR" id="Q0HEZ4"/>
<dbReference type="KEGG" id="she:Shewmr4_3306"/>
<dbReference type="HOGENOM" id="CLU_036838_2_0_6"/>
<dbReference type="GO" id="GO:0005829">
    <property type="term" value="C:cytosol"/>
    <property type="evidence" value="ECO:0007669"/>
    <property type="project" value="TreeGrafter"/>
</dbReference>
<dbReference type="GO" id="GO:0008477">
    <property type="term" value="F:purine nucleosidase activity"/>
    <property type="evidence" value="ECO:0007669"/>
    <property type="project" value="TreeGrafter"/>
</dbReference>
<dbReference type="GO" id="GO:0045437">
    <property type="term" value="F:uridine nucleosidase activity"/>
    <property type="evidence" value="ECO:0007669"/>
    <property type="project" value="InterPro"/>
</dbReference>
<dbReference type="GO" id="GO:0015949">
    <property type="term" value="P:nucleobase-containing small molecule interconversion"/>
    <property type="evidence" value="ECO:0007669"/>
    <property type="project" value="InterPro"/>
</dbReference>
<dbReference type="GO" id="GO:0006152">
    <property type="term" value="P:purine nucleoside catabolic process"/>
    <property type="evidence" value="ECO:0007669"/>
    <property type="project" value="TreeGrafter"/>
</dbReference>
<dbReference type="GO" id="GO:0006206">
    <property type="term" value="P:pyrimidine nucleobase metabolic process"/>
    <property type="evidence" value="ECO:0007669"/>
    <property type="project" value="UniProtKB-UniRule"/>
</dbReference>
<dbReference type="CDD" id="cd02651">
    <property type="entry name" value="nuc_hydro_IU_UC_XIUA"/>
    <property type="match status" value="1"/>
</dbReference>
<dbReference type="FunFam" id="3.90.245.10:FF:000001">
    <property type="entry name" value="Pyrimidine-specific ribonucleoside hydrolase RihA"/>
    <property type="match status" value="1"/>
</dbReference>
<dbReference type="Gene3D" id="3.90.245.10">
    <property type="entry name" value="Ribonucleoside hydrolase-like"/>
    <property type="match status" value="1"/>
</dbReference>
<dbReference type="HAMAP" id="MF_01431">
    <property type="entry name" value="Pyrim_hydro_RihA"/>
    <property type="match status" value="1"/>
</dbReference>
<dbReference type="InterPro" id="IPR015910">
    <property type="entry name" value="I/U_nuclsd_hydro_CS"/>
</dbReference>
<dbReference type="InterPro" id="IPR001910">
    <property type="entry name" value="Inosine/uridine_hydrolase_dom"/>
</dbReference>
<dbReference type="InterPro" id="IPR023186">
    <property type="entry name" value="IUNH"/>
</dbReference>
<dbReference type="InterPro" id="IPR022975">
    <property type="entry name" value="Pyrim_hydro_RihA"/>
</dbReference>
<dbReference type="InterPro" id="IPR036452">
    <property type="entry name" value="Ribo_hydro-like"/>
</dbReference>
<dbReference type="NCBIfam" id="NF007761">
    <property type="entry name" value="PRK10443.1"/>
    <property type="match status" value="1"/>
</dbReference>
<dbReference type="PANTHER" id="PTHR12304">
    <property type="entry name" value="INOSINE-URIDINE PREFERRING NUCLEOSIDE HYDROLASE"/>
    <property type="match status" value="1"/>
</dbReference>
<dbReference type="PANTHER" id="PTHR12304:SF4">
    <property type="entry name" value="URIDINE NUCLEOSIDASE"/>
    <property type="match status" value="1"/>
</dbReference>
<dbReference type="Pfam" id="PF01156">
    <property type="entry name" value="IU_nuc_hydro"/>
    <property type="match status" value="1"/>
</dbReference>
<dbReference type="SUPFAM" id="SSF53590">
    <property type="entry name" value="Nucleoside hydrolase"/>
    <property type="match status" value="1"/>
</dbReference>
<dbReference type="PROSITE" id="PS01247">
    <property type="entry name" value="IUNH"/>
    <property type="match status" value="1"/>
</dbReference>
<protein>
    <recommendedName>
        <fullName evidence="1">Pyrimidine-specific ribonucleoside hydrolase RihA</fullName>
        <ecNumber evidence="1">3.2.-.-</ecNumber>
    </recommendedName>
    <alternativeName>
        <fullName evidence="1">Cytidine/uridine-specific hydrolase</fullName>
    </alternativeName>
</protein>
<keyword id="KW-0326">Glycosidase</keyword>
<keyword id="KW-0378">Hydrolase</keyword>